<name>SYS_NEIM0</name>
<protein>
    <recommendedName>
        <fullName evidence="1">Serine--tRNA ligase</fullName>
        <ecNumber evidence="1">6.1.1.11</ecNumber>
    </recommendedName>
    <alternativeName>
        <fullName evidence="1">Seryl-tRNA synthetase</fullName>
        <shortName evidence="1">SerRS</shortName>
    </alternativeName>
    <alternativeName>
        <fullName evidence="1">Seryl-tRNA(Ser/Sec) synthetase</fullName>
    </alternativeName>
</protein>
<feature type="chain" id="PRO_1000077203" description="Serine--tRNA ligase">
    <location>
        <begin position="1"/>
        <end position="431"/>
    </location>
</feature>
<feature type="binding site" evidence="1">
    <location>
        <begin position="237"/>
        <end position="239"/>
    </location>
    <ligand>
        <name>L-serine</name>
        <dbReference type="ChEBI" id="CHEBI:33384"/>
    </ligand>
</feature>
<feature type="binding site" evidence="1">
    <location>
        <begin position="268"/>
        <end position="270"/>
    </location>
    <ligand>
        <name>ATP</name>
        <dbReference type="ChEBI" id="CHEBI:30616"/>
    </ligand>
</feature>
<feature type="binding site" evidence="1">
    <location>
        <position position="291"/>
    </location>
    <ligand>
        <name>L-serine</name>
        <dbReference type="ChEBI" id="CHEBI:33384"/>
    </ligand>
</feature>
<feature type="binding site" evidence="1">
    <location>
        <begin position="355"/>
        <end position="358"/>
    </location>
    <ligand>
        <name>ATP</name>
        <dbReference type="ChEBI" id="CHEBI:30616"/>
    </ligand>
</feature>
<feature type="binding site" evidence="1">
    <location>
        <position position="390"/>
    </location>
    <ligand>
        <name>L-serine</name>
        <dbReference type="ChEBI" id="CHEBI:33384"/>
    </ligand>
</feature>
<proteinExistence type="inferred from homology"/>
<organism>
    <name type="scientific">Neisseria meningitidis serogroup C (strain 053442)</name>
    <dbReference type="NCBI Taxonomy" id="374833"/>
    <lineage>
        <taxon>Bacteria</taxon>
        <taxon>Pseudomonadati</taxon>
        <taxon>Pseudomonadota</taxon>
        <taxon>Betaproteobacteria</taxon>
        <taxon>Neisseriales</taxon>
        <taxon>Neisseriaceae</taxon>
        <taxon>Neisseria</taxon>
    </lineage>
</organism>
<sequence length="431" mass="47726">MLDIQLLRSNTAAVAERLAARGYEFDAARFNALEEQRKAVQVKTEELQASRNSISKQIGALKGQGKHEEAQAAMDQVAQIKTDLEQAAADLDAVQKELDAWLLSIPNLPHESVPAGKDETENVEVRKVGTPREFDFEIKDHVDLGEPLGLDFEGGAKLSGARFTVMRGQIARLHRALAQFMLDTHTLQHGYTEHYTPYIVDDTTLQGTGQLPKFAEDLFHVTRGGDETKTTQYLIPTAEVTLTNTVADSIIPSEQLPLKLTAHSPCFRSEAGSYGKDTRGLIRQHQFDKVEMVQIVHPEKSYETLEEMVGHAENILKALELPYRVITLCTGDMGFGAAKTYDLEVWVPAQNTYREISSCSNCEDFQARRMKARFKDENGKNRLVHTLNGSGLAVGRTLVAVLENHQNADGSINIPAALQPYMGGVAKLEVK</sequence>
<comment type="function">
    <text evidence="1">Catalyzes the attachment of serine to tRNA(Ser). Is also able to aminoacylate tRNA(Sec) with serine, to form the misacylated tRNA L-seryl-tRNA(Sec), which will be further converted into selenocysteinyl-tRNA(Sec).</text>
</comment>
<comment type="catalytic activity">
    <reaction evidence="1">
        <text>tRNA(Ser) + L-serine + ATP = L-seryl-tRNA(Ser) + AMP + diphosphate + H(+)</text>
        <dbReference type="Rhea" id="RHEA:12292"/>
        <dbReference type="Rhea" id="RHEA-COMP:9669"/>
        <dbReference type="Rhea" id="RHEA-COMP:9703"/>
        <dbReference type="ChEBI" id="CHEBI:15378"/>
        <dbReference type="ChEBI" id="CHEBI:30616"/>
        <dbReference type="ChEBI" id="CHEBI:33019"/>
        <dbReference type="ChEBI" id="CHEBI:33384"/>
        <dbReference type="ChEBI" id="CHEBI:78442"/>
        <dbReference type="ChEBI" id="CHEBI:78533"/>
        <dbReference type="ChEBI" id="CHEBI:456215"/>
        <dbReference type="EC" id="6.1.1.11"/>
    </reaction>
</comment>
<comment type="catalytic activity">
    <reaction evidence="1">
        <text>tRNA(Sec) + L-serine + ATP = L-seryl-tRNA(Sec) + AMP + diphosphate + H(+)</text>
        <dbReference type="Rhea" id="RHEA:42580"/>
        <dbReference type="Rhea" id="RHEA-COMP:9742"/>
        <dbReference type="Rhea" id="RHEA-COMP:10128"/>
        <dbReference type="ChEBI" id="CHEBI:15378"/>
        <dbReference type="ChEBI" id="CHEBI:30616"/>
        <dbReference type="ChEBI" id="CHEBI:33019"/>
        <dbReference type="ChEBI" id="CHEBI:33384"/>
        <dbReference type="ChEBI" id="CHEBI:78442"/>
        <dbReference type="ChEBI" id="CHEBI:78533"/>
        <dbReference type="ChEBI" id="CHEBI:456215"/>
        <dbReference type="EC" id="6.1.1.11"/>
    </reaction>
</comment>
<comment type="pathway">
    <text evidence="1">Aminoacyl-tRNA biosynthesis; selenocysteinyl-tRNA(Sec) biosynthesis; L-seryl-tRNA(Sec) from L-serine and tRNA(Sec): step 1/1.</text>
</comment>
<comment type="subunit">
    <text evidence="1">Homodimer. The tRNA molecule binds across the dimer.</text>
</comment>
<comment type="subcellular location">
    <subcellularLocation>
        <location evidence="1">Cytoplasm</location>
    </subcellularLocation>
</comment>
<comment type="domain">
    <text evidence="1">Consists of two distinct domains, a catalytic core and a N-terminal extension that is involved in tRNA binding.</text>
</comment>
<comment type="similarity">
    <text evidence="1">Belongs to the class-II aminoacyl-tRNA synthetase family. Type-1 seryl-tRNA synthetase subfamily.</text>
</comment>
<accession>A9M1Q6</accession>
<reference key="1">
    <citation type="journal article" date="2008" name="Genomics">
        <title>Characterization of ST-4821 complex, a unique Neisseria meningitidis clone.</title>
        <authorList>
            <person name="Peng J."/>
            <person name="Yang L."/>
            <person name="Yang F."/>
            <person name="Yang J."/>
            <person name="Yan Y."/>
            <person name="Nie H."/>
            <person name="Zhang X."/>
            <person name="Xiong Z."/>
            <person name="Jiang Y."/>
            <person name="Cheng F."/>
            <person name="Xu X."/>
            <person name="Chen S."/>
            <person name="Sun L."/>
            <person name="Li W."/>
            <person name="Shen Y."/>
            <person name="Shao Z."/>
            <person name="Liang X."/>
            <person name="Xu J."/>
            <person name="Jin Q."/>
        </authorList>
    </citation>
    <scope>NUCLEOTIDE SEQUENCE [LARGE SCALE GENOMIC DNA]</scope>
    <source>
        <strain>053442</strain>
    </source>
</reference>
<keyword id="KW-0030">Aminoacyl-tRNA synthetase</keyword>
<keyword id="KW-0067">ATP-binding</keyword>
<keyword id="KW-0963">Cytoplasm</keyword>
<keyword id="KW-0436">Ligase</keyword>
<keyword id="KW-0547">Nucleotide-binding</keyword>
<keyword id="KW-0648">Protein biosynthesis</keyword>
<dbReference type="EC" id="6.1.1.11" evidence="1"/>
<dbReference type="EMBL" id="CP000381">
    <property type="protein sequence ID" value="ABX73745.1"/>
    <property type="molecule type" value="Genomic_DNA"/>
</dbReference>
<dbReference type="RefSeq" id="WP_002234183.1">
    <property type="nucleotide sequence ID" value="NC_010120.1"/>
</dbReference>
<dbReference type="SMR" id="A9M1Q6"/>
<dbReference type="KEGG" id="nmn:NMCC_1597"/>
<dbReference type="HOGENOM" id="CLU_023797_1_1_4"/>
<dbReference type="UniPathway" id="UPA00906">
    <property type="reaction ID" value="UER00895"/>
</dbReference>
<dbReference type="Proteomes" id="UP000001177">
    <property type="component" value="Chromosome"/>
</dbReference>
<dbReference type="GO" id="GO:0005737">
    <property type="term" value="C:cytoplasm"/>
    <property type="evidence" value="ECO:0007669"/>
    <property type="project" value="UniProtKB-SubCell"/>
</dbReference>
<dbReference type="GO" id="GO:0005524">
    <property type="term" value="F:ATP binding"/>
    <property type="evidence" value="ECO:0007669"/>
    <property type="project" value="UniProtKB-UniRule"/>
</dbReference>
<dbReference type="GO" id="GO:0004828">
    <property type="term" value="F:serine-tRNA ligase activity"/>
    <property type="evidence" value="ECO:0007669"/>
    <property type="project" value="UniProtKB-UniRule"/>
</dbReference>
<dbReference type="GO" id="GO:0016260">
    <property type="term" value="P:selenocysteine biosynthetic process"/>
    <property type="evidence" value="ECO:0007669"/>
    <property type="project" value="UniProtKB-UniRule"/>
</dbReference>
<dbReference type="GO" id="GO:0006434">
    <property type="term" value="P:seryl-tRNA aminoacylation"/>
    <property type="evidence" value="ECO:0007669"/>
    <property type="project" value="UniProtKB-UniRule"/>
</dbReference>
<dbReference type="CDD" id="cd00770">
    <property type="entry name" value="SerRS_core"/>
    <property type="match status" value="1"/>
</dbReference>
<dbReference type="Gene3D" id="3.30.930.10">
    <property type="entry name" value="Bira Bifunctional Protein, Domain 2"/>
    <property type="match status" value="1"/>
</dbReference>
<dbReference type="Gene3D" id="1.10.287.40">
    <property type="entry name" value="Serine-tRNA synthetase, tRNA binding domain"/>
    <property type="match status" value="1"/>
</dbReference>
<dbReference type="HAMAP" id="MF_00176">
    <property type="entry name" value="Ser_tRNA_synth_type1"/>
    <property type="match status" value="1"/>
</dbReference>
<dbReference type="InterPro" id="IPR002314">
    <property type="entry name" value="aa-tRNA-synt_IIb"/>
</dbReference>
<dbReference type="InterPro" id="IPR006195">
    <property type="entry name" value="aa-tRNA-synth_II"/>
</dbReference>
<dbReference type="InterPro" id="IPR045864">
    <property type="entry name" value="aa-tRNA-synth_II/BPL/LPL"/>
</dbReference>
<dbReference type="InterPro" id="IPR002317">
    <property type="entry name" value="Ser-tRNA-ligase_type_1"/>
</dbReference>
<dbReference type="InterPro" id="IPR015866">
    <property type="entry name" value="Ser-tRNA-synth_1_N"/>
</dbReference>
<dbReference type="InterPro" id="IPR042103">
    <property type="entry name" value="SerRS_1_N_sf"/>
</dbReference>
<dbReference type="InterPro" id="IPR033729">
    <property type="entry name" value="SerRS_core"/>
</dbReference>
<dbReference type="InterPro" id="IPR010978">
    <property type="entry name" value="tRNA-bd_arm"/>
</dbReference>
<dbReference type="NCBIfam" id="TIGR00414">
    <property type="entry name" value="serS"/>
    <property type="match status" value="1"/>
</dbReference>
<dbReference type="PANTHER" id="PTHR43697:SF1">
    <property type="entry name" value="SERINE--TRNA LIGASE"/>
    <property type="match status" value="1"/>
</dbReference>
<dbReference type="PANTHER" id="PTHR43697">
    <property type="entry name" value="SERYL-TRNA SYNTHETASE"/>
    <property type="match status" value="1"/>
</dbReference>
<dbReference type="Pfam" id="PF02403">
    <property type="entry name" value="Seryl_tRNA_N"/>
    <property type="match status" value="1"/>
</dbReference>
<dbReference type="Pfam" id="PF00587">
    <property type="entry name" value="tRNA-synt_2b"/>
    <property type="match status" value="1"/>
</dbReference>
<dbReference type="PIRSF" id="PIRSF001529">
    <property type="entry name" value="Ser-tRNA-synth_IIa"/>
    <property type="match status" value="1"/>
</dbReference>
<dbReference type="PRINTS" id="PR00981">
    <property type="entry name" value="TRNASYNTHSER"/>
</dbReference>
<dbReference type="SUPFAM" id="SSF55681">
    <property type="entry name" value="Class II aaRS and biotin synthetases"/>
    <property type="match status" value="1"/>
</dbReference>
<dbReference type="SUPFAM" id="SSF46589">
    <property type="entry name" value="tRNA-binding arm"/>
    <property type="match status" value="1"/>
</dbReference>
<dbReference type="PROSITE" id="PS50862">
    <property type="entry name" value="AA_TRNA_LIGASE_II"/>
    <property type="match status" value="1"/>
</dbReference>
<gene>
    <name evidence="1" type="primary">serS</name>
    <name type="ordered locus">NMCC_1597</name>
</gene>
<evidence type="ECO:0000255" key="1">
    <source>
        <dbReference type="HAMAP-Rule" id="MF_00176"/>
    </source>
</evidence>